<evidence type="ECO:0000255" key="1">
    <source>
        <dbReference type="HAMAP-Rule" id="MF_00374"/>
    </source>
</evidence>
<evidence type="ECO:0000305" key="2"/>
<gene>
    <name evidence="1" type="primary">rpmC</name>
    <name type="ordered locus">RB7846</name>
</gene>
<name>RL29_RHOBA</name>
<keyword id="KW-1185">Reference proteome</keyword>
<keyword id="KW-0687">Ribonucleoprotein</keyword>
<keyword id="KW-0689">Ribosomal protein</keyword>
<organism>
    <name type="scientific">Rhodopirellula baltica (strain DSM 10527 / NCIMB 13988 / SH1)</name>
    <dbReference type="NCBI Taxonomy" id="243090"/>
    <lineage>
        <taxon>Bacteria</taxon>
        <taxon>Pseudomonadati</taxon>
        <taxon>Planctomycetota</taxon>
        <taxon>Planctomycetia</taxon>
        <taxon>Pirellulales</taxon>
        <taxon>Pirellulaceae</taxon>
        <taxon>Rhodopirellula</taxon>
    </lineage>
</organism>
<proteinExistence type="inferred from homology"/>
<accession>Q7UN12</accession>
<reference key="1">
    <citation type="journal article" date="2003" name="Proc. Natl. Acad. Sci. U.S.A.">
        <title>Complete genome sequence of the marine planctomycete Pirellula sp. strain 1.</title>
        <authorList>
            <person name="Gloeckner F.O."/>
            <person name="Kube M."/>
            <person name="Bauer M."/>
            <person name="Teeling H."/>
            <person name="Lombardot T."/>
            <person name="Ludwig W."/>
            <person name="Gade D."/>
            <person name="Beck A."/>
            <person name="Borzym K."/>
            <person name="Heitmann K."/>
            <person name="Rabus R."/>
            <person name="Schlesner H."/>
            <person name="Amann R."/>
            <person name="Reinhardt R."/>
        </authorList>
    </citation>
    <scope>NUCLEOTIDE SEQUENCE [LARGE SCALE GENOMIC DNA]</scope>
    <source>
        <strain>DSM 10527 / NCIMB 13988 / SH1</strain>
    </source>
</reference>
<dbReference type="EMBL" id="BX294146">
    <property type="protein sequence ID" value="CAD75607.1"/>
    <property type="molecule type" value="Genomic_DNA"/>
</dbReference>
<dbReference type="RefSeq" id="NP_868060.1">
    <property type="nucleotide sequence ID" value="NC_005027.1"/>
</dbReference>
<dbReference type="SMR" id="Q7UN12"/>
<dbReference type="STRING" id="243090.RB7846"/>
<dbReference type="EnsemblBacteria" id="CAD75607">
    <property type="protein sequence ID" value="CAD75607"/>
    <property type="gene ID" value="RB7846"/>
</dbReference>
<dbReference type="KEGG" id="rba:RB7846"/>
<dbReference type="PATRIC" id="fig|243090.15.peg.3791"/>
<dbReference type="eggNOG" id="COG0255">
    <property type="taxonomic scope" value="Bacteria"/>
</dbReference>
<dbReference type="HOGENOM" id="CLU_158491_3_2_0"/>
<dbReference type="InParanoid" id="Q7UN12"/>
<dbReference type="OrthoDB" id="9815192at2"/>
<dbReference type="Proteomes" id="UP000001025">
    <property type="component" value="Chromosome"/>
</dbReference>
<dbReference type="GO" id="GO:0022625">
    <property type="term" value="C:cytosolic large ribosomal subunit"/>
    <property type="evidence" value="ECO:0000318"/>
    <property type="project" value="GO_Central"/>
</dbReference>
<dbReference type="GO" id="GO:0003735">
    <property type="term" value="F:structural constituent of ribosome"/>
    <property type="evidence" value="ECO:0007669"/>
    <property type="project" value="InterPro"/>
</dbReference>
<dbReference type="GO" id="GO:0006412">
    <property type="term" value="P:translation"/>
    <property type="evidence" value="ECO:0007669"/>
    <property type="project" value="UniProtKB-UniRule"/>
</dbReference>
<dbReference type="CDD" id="cd00427">
    <property type="entry name" value="Ribosomal_L29_HIP"/>
    <property type="match status" value="1"/>
</dbReference>
<dbReference type="Gene3D" id="1.10.287.310">
    <property type="match status" value="1"/>
</dbReference>
<dbReference type="HAMAP" id="MF_00374">
    <property type="entry name" value="Ribosomal_uL29"/>
    <property type="match status" value="1"/>
</dbReference>
<dbReference type="InterPro" id="IPR050063">
    <property type="entry name" value="Ribosomal_protein_uL29"/>
</dbReference>
<dbReference type="InterPro" id="IPR001854">
    <property type="entry name" value="Ribosomal_uL29"/>
</dbReference>
<dbReference type="InterPro" id="IPR036049">
    <property type="entry name" value="Ribosomal_uL29_sf"/>
</dbReference>
<dbReference type="NCBIfam" id="TIGR00012">
    <property type="entry name" value="L29"/>
    <property type="match status" value="1"/>
</dbReference>
<dbReference type="PANTHER" id="PTHR10916">
    <property type="entry name" value="60S RIBOSOMAL PROTEIN L35/50S RIBOSOMAL PROTEIN L29"/>
    <property type="match status" value="1"/>
</dbReference>
<dbReference type="PANTHER" id="PTHR10916:SF0">
    <property type="entry name" value="LARGE RIBOSOMAL SUBUNIT PROTEIN UL29C"/>
    <property type="match status" value="1"/>
</dbReference>
<dbReference type="Pfam" id="PF00831">
    <property type="entry name" value="Ribosomal_L29"/>
    <property type="match status" value="1"/>
</dbReference>
<dbReference type="SUPFAM" id="SSF46561">
    <property type="entry name" value="Ribosomal protein L29 (L29p)"/>
    <property type="match status" value="1"/>
</dbReference>
<comment type="similarity">
    <text evidence="1">Belongs to the universal ribosomal protein uL29 family.</text>
</comment>
<feature type="chain" id="PRO_0000226304" description="Large ribosomal subunit protein uL29">
    <location>
        <begin position="1"/>
        <end position="72"/>
    </location>
</feature>
<protein>
    <recommendedName>
        <fullName evidence="1">Large ribosomal subunit protein uL29</fullName>
    </recommendedName>
    <alternativeName>
        <fullName evidence="2">50S ribosomal protein L29</fullName>
    </alternativeName>
</protein>
<sequence>MSNSMTKLTELREMSDEQLDATAKEAAETLFRLRFQSQSERLNTPSEIKKNRKTIARVKTIQTERQLAQPQA</sequence>